<gene>
    <name type="primary">acuC</name>
    <name type="ordered locus">SAV1735</name>
</gene>
<protein>
    <recommendedName>
        <fullName>Acetoin utilization protein AcuC</fullName>
    </recommendedName>
</protein>
<proteinExistence type="inferred from homology"/>
<organism>
    <name type="scientific">Staphylococcus aureus (strain Mu50 / ATCC 700699)</name>
    <dbReference type="NCBI Taxonomy" id="158878"/>
    <lineage>
        <taxon>Bacteria</taxon>
        <taxon>Bacillati</taxon>
        <taxon>Bacillota</taxon>
        <taxon>Bacilli</taxon>
        <taxon>Bacillales</taxon>
        <taxon>Staphylococcaceae</taxon>
        <taxon>Staphylococcus</taxon>
    </lineage>
</organism>
<keyword id="KW-0006">Acetoin catabolism</keyword>
<name>ACUC_STAAM</name>
<dbReference type="EMBL" id="BA000017">
    <property type="protein sequence ID" value="BAB57897.1"/>
    <property type="molecule type" value="Genomic_DNA"/>
</dbReference>
<dbReference type="RefSeq" id="WP_001184011.1">
    <property type="nucleotide sequence ID" value="NC_002758.2"/>
</dbReference>
<dbReference type="SMR" id="P64375"/>
<dbReference type="KEGG" id="sav:SAV1735"/>
<dbReference type="HOGENOM" id="CLU_007727_8_0_9"/>
<dbReference type="PhylomeDB" id="P64375"/>
<dbReference type="UniPathway" id="UPA00040"/>
<dbReference type="Proteomes" id="UP000002481">
    <property type="component" value="Chromosome"/>
</dbReference>
<dbReference type="GO" id="GO:0004407">
    <property type="term" value="F:histone deacetylase activity"/>
    <property type="evidence" value="ECO:0007669"/>
    <property type="project" value="TreeGrafter"/>
</dbReference>
<dbReference type="GO" id="GO:0045150">
    <property type="term" value="P:acetoin catabolic process"/>
    <property type="evidence" value="ECO:0007669"/>
    <property type="project" value="UniProtKB-UniPathway"/>
</dbReference>
<dbReference type="GO" id="GO:0040029">
    <property type="term" value="P:epigenetic regulation of gene expression"/>
    <property type="evidence" value="ECO:0007669"/>
    <property type="project" value="TreeGrafter"/>
</dbReference>
<dbReference type="CDD" id="cd09994">
    <property type="entry name" value="HDAC_AcuC_like"/>
    <property type="match status" value="1"/>
</dbReference>
<dbReference type="Gene3D" id="3.40.800.20">
    <property type="entry name" value="Histone deacetylase domain"/>
    <property type="match status" value="1"/>
</dbReference>
<dbReference type="InterPro" id="IPR003085">
    <property type="entry name" value="AcuC"/>
</dbReference>
<dbReference type="InterPro" id="IPR050284">
    <property type="entry name" value="HDAC_PDAC"/>
</dbReference>
<dbReference type="InterPro" id="IPR000286">
    <property type="entry name" value="His_deacetylse"/>
</dbReference>
<dbReference type="InterPro" id="IPR023801">
    <property type="entry name" value="His_deacetylse_dom"/>
</dbReference>
<dbReference type="InterPro" id="IPR037138">
    <property type="entry name" value="His_deacetylse_dom_sf"/>
</dbReference>
<dbReference type="InterPro" id="IPR023696">
    <property type="entry name" value="Ureohydrolase_dom_sf"/>
</dbReference>
<dbReference type="PANTHER" id="PTHR10625:SF10">
    <property type="entry name" value="HISTONE DEACETYLASE HDAC1"/>
    <property type="match status" value="1"/>
</dbReference>
<dbReference type="PANTHER" id="PTHR10625">
    <property type="entry name" value="HISTONE DEACETYLASE HDAC1-RELATED"/>
    <property type="match status" value="1"/>
</dbReference>
<dbReference type="Pfam" id="PF00850">
    <property type="entry name" value="Hist_deacetyl"/>
    <property type="match status" value="1"/>
</dbReference>
<dbReference type="PRINTS" id="PR01272">
    <property type="entry name" value="ACUCPROTEIN"/>
</dbReference>
<dbReference type="PRINTS" id="PR01270">
    <property type="entry name" value="HDASUPER"/>
</dbReference>
<dbReference type="SUPFAM" id="SSF52768">
    <property type="entry name" value="Arginase/deacetylase"/>
    <property type="match status" value="1"/>
</dbReference>
<comment type="function">
    <text evidence="1">Role in growth on acetoin or butanediol. Involved in the breakdown of these compounds used as a carbon source (By similarity).</text>
</comment>
<comment type="pathway">
    <text>Ketone degradation; acetoin degradation.</text>
</comment>
<comment type="similarity">
    <text evidence="2">Belongs to the histone deacetylase family.</text>
</comment>
<sequence>MQQHSSKTAYVYSDKLLQYRFHDQHPFNQMRLKLTTELLLNANLLSPEQIVQPRIATGDELMLIHKYDYVEAIKHASHGIISEDEAKKYGLNDEENGQFKHMHRHSATIVGGALTLADLIMSGKVLNGCHLGGGLHHAQPGRASGFCIYNDIAITAQYIAKEYNQRVLIIDTDAHHGDGTQWSFYADNHVTTYSIHETGKFLFPGSGHYTERGEDIGYGHTVNVPLEPYTEDASFLECFKLTVEPVVKSFKPDIILSVNGVDIHYRDPLTHLNCTLHSLYEIPYFVKYLADSYTNGKVIMFGGGGYNIWRVVPRAWSHVFLSLIDQPIQSGYLPLEWINKWKHYSSELLPKRWEDRLNDYTYVPRTKEISEKNKKLALHIASWYESTRQ</sequence>
<evidence type="ECO:0000250" key="1"/>
<evidence type="ECO:0000305" key="2"/>
<feature type="chain" id="PRO_0000114731" description="Acetoin utilization protein AcuC">
    <location>
        <begin position="1"/>
        <end position="389"/>
    </location>
</feature>
<accession>P64375</accession>
<accession>Q99TC9</accession>
<reference key="1">
    <citation type="journal article" date="2001" name="Lancet">
        <title>Whole genome sequencing of meticillin-resistant Staphylococcus aureus.</title>
        <authorList>
            <person name="Kuroda M."/>
            <person name="Ohta T."/>
            <person name="Uchiyama I."/>
            <person name="Baba T."/>
            <person name="Yuzawa H."/>
            <person name="Kobayashi I."/>
            <person name="Cui L."/>
            <person name="Oguchi A."/>
            <person name="Aoki K."/>
            <person name="Nagai Y."/>
            <person name="Lian J.-Q."/>
            <person name="Ito T."/>
            <person name="Kanamori M."/>
            <person name="Matsumaru H."/>
            <person name="Maruyama A."/>
            <person name="Murakami H."/>
            <person name="Hosoyama A."/>
            <person name="Mizutani-Ui Y."/>
            <person name="Takahashi N.K."/>
            <person name="Sawano T."/>
            <person name="Inoue R."/>
            <person name="Kaito C."/>
            <person name="Sekimizu K."/>
            <person name="Hirakawa H."/>
            <person name="Kuhara S."/>
            <person name="Goto S."/>
            <person name="Yabuzaki J."/>
            <person name="Kanehisa M."/>
            <person name="Yamashita A."/>
            <person name="Oshima K."/>
            <person name="Furuya K."/>
            <person name="Yoshino C."/>
            <person name="Shiba T."/>
            <person name="Hattori M."/>
            <person name="Ogasawara N."/>
            <person name="Hayashi H."/>
            <person name="Hiramatsu K."/>
        </authorList>
    </citation>
    <scope>NUCLEOTIDE SEQUENCE [LARGE SCALE GENOMIC DNA]</scope>
    <source>
        <strain>Mu50 / ATCC 700699</strain>
    </source>
</reference>